<protein>
    <recommendedName>
        <fullName evidence="1">Glutamate--tRNA ligase 1</fullName>
        <ecNumber evidence="1">6.1.1.17</ecNumber>
    </recommendedName>
    <alternativeName>
        <fullName evidence="1">Glutamyl-tRNA synthetase 1</fullName>
        <shortName evidence="1">GluRS 1</shortName>
    </alternativeName>
</protein>
<proteinExistence type="inferred from homology"/>
<comment type="function">
    <text evidence="1">Catalyzes the attachment of glutamate to tRNA(Glu) in a two-step reaction: glutamate is first activated by ATP to form Glu-AMP and then transferred to the acceptor end of tRNA(Glu).</text>
</comment>
<comment type="catalytic activity">
    <reaction evidence="1">
        <text>tRNA(Glu) + L-glutamate + ATP = L-glutamyl-tRNA(Glu) + AMP + diphosphate</text>
        <dbReference type="Rhea" id="RHEA:23540"/>
        <dbReference type="Rhea" id="RHEA-COMP:9663"/>
        <dbReference type="Rhea" id="RHEA-COMP:9680"/>
        <dbReference type="ChEBI" id="CHEBI:29985"/>
        <dbReference type="ChEBI" id="CHEBI:30616"/>
        <dbReference type="ChEBI" id="CHEBI:33019"/>
        <dbReference type="ChEBI" id="CHEBI:78442"/>
        <dbReference type="ChEBI" id="CHEBI:78520"/>
        <dbReference type="ChEBI" id="CHEBI:456215"/>
        <dbReference type="EC" id="6.1.1.17"/>
    </reaction>
</comment>
<comment type="subunit">
    <text evidence="1">Monomer.</text>
</comment>
<comment type="subcellular location">
    <subcellularLocation>
        <location evidence="1">Cytoplasm</location>
    </subcellularLocation>
</comment>
<comment type="similarity">
    <text evidence="1">Belongs to the class-I aminoacyl-tRNA synthetase family. Glutamate--tRNA ligase type 1 subfamily.</text>
</comment>
<sequence>MTVTVRFAPSPTGYIHIGNTRTALSNWLYASKNNGKFILRYDDTDVERSKDEYAQAIAVDLDWLGVRPDRVEYQSKRFDIYAKAVEKLKTAGLLYACYETADELERRRKFRLARRLPPVYGREALKLTDAEKAALEAEGRKPHWRFLLPNFESDPFATQRTEVHWDDLVRGPQTVDLASMSDPILVREDGTYLYTLPSVVDDIDMGVTHIIRGDDHVTNTGVQISIFKALGATPPVFGHHNLLTTISGEGLSKRTGALSVGSLREAGYEPMAVASLAILIGTSESVTAAPDMAALAEHFDLASISKSSAKFDPSELDALNRSLLHEMPFEKAKPRLEALGICGAKAESFWLAVRGNLDRFSDVSHWWQVVSGDLPEAPDLSGEDRDFVRHAFDLLPPEPWNGQTWKSWTEAVKSATGRKGKNLFMPLRLALTGQAHGPELADLLVLVGLERTKSRRP</sequence>
<reference key="1">
    <citation type="journal article" date="2005" name="Infect. Immun.">
        <title>Whole-genome analyses of speciation events in pathogenic Brucellae.</title>
        <authorList>
            <person name="Chain P.S."/>
            <person name="Comerci D.J."/>
            <person name="Tolmasky M.E."/>
            <person name="Larimer F.W."/>
            <person name="Malfatti S.A."/>
            <person name="Vergez L.M."/>
            <person name="Aguero F."/>
            <person name="Land M.L."/>
            <person name="Ugalde R.A."/>
            <person name="Garcia E."/>
        </authorList>
    </citation>
    <scope>NUCLEOTIDE SEQUENCE [LARGE SCALE GENOMIC DNA]</scope>
    <source>
        <strain>2308</strain>
    </source>
</reference>
<gene>
    <name evidence="1" type="primary">gltX1</name>
    <name type="synonym">gltX-1</name>
    <name type="ordered locus">BAB1_1034</name>
</gene>
<accession>Q2YQ56</accession>
<dbReference type="EC" id="6.1.1.17" evidence="1"/>
<dbReference type="EMBL" id="AM040264">
    <property type="protein sequence ID" value="CAJ10990.1"/>
    <property type="molecule type" value="Genomic_DNA"/>
</dbReference>
<dbReference type="SMR" id="Q2YQ56"/>
<dbReference type="STRING" id="359391.BAB1_1034"/>
<dbReference type="KEGG" id="bmf:BAB1_1034"/>
<dbReference type="PATRIC" id="fig|359391.11.peg.1747"/>
<dbReference type="HOGENOM" id="CLU_015768_6_1_5"/>
<dbReference type="PhylomeDB" id="Q2YQ56"/>
<dbReference type="Proteomes" id="UP000002719">
    <property type="component" value="Chromosome I"/>
</dbReference>
<dbReference type="GO" id="GO:0005737">
    <property type="term" value="C:cytoplasm"/>
    <property type="evidence" value="ECO:0007669"/>
    <property type="project" value="UniProtKB-SubCell"/>
</dbReference>
<dbReference type="GO" id="GO:0005524">
    <property type="term" value="F:ATP binding"/>
    <property type="evidence" value="ECO:0007669"/>
    <property type="project" value="UniProtKB-UniRule"/>
</dbReference>
<dbReference type="GO" id="GO:0004818">
    <property type="term" value="F:glutamate-tRNA ligase activity"/>
    <property type="evidence" value="ECO:0007669"/>
    <property type="project" value="UniProtKB-UniRule"/>
</dbReference>
<dbReference type="GO" id="GO:0000049">
    <property type="term" value="F:tRNA binding"/>
    <property type="evidence" value="ECO:0007669"/>
    <property type="project" value="InterPro"/>
</dbReference>
<dbReference type="GO" id="GO:0008270">
    <property type="term" value="F:zinc ion binding"/>
    <property type="evidence" value="ECO:0007669"/>
    <property type="project" value="InterPro"/>
</dbReference>
<dbReference type="GO" id="GO:0006424">
    <property type="term" value="P:glutamyl-tRNA aminoacylation"/>
    <property type="evidence" value="ECO:0007669"/>
    <property type="project" value="UniProtKB-UniRule"/>
</dbReference>
<dbReference type="CDD" id="cd00808">
    <property type="entry name" value="GluRS_core"/>
    <property type="match status" value="1"/>
</dbReference>
<dbReference type="Gene3D" id="1.10.10.350">
    <property type="match status" value="1"/>
</dbReference>
<dbReference type="Gene3D" id="3.40.50.620">
    <property type="entry name" value="HUPs"/>
    <property type="match status" value="1"/>
</dbReference>
<dbReference type="HAMAP" id="MF_00022">
    <property type="entry name" value="Glu_tRNA_synth_type1"/>
    <property type="match status" value="1"/>
</dbReference>
<dbReference type="InterPro" id="IPR045462">
    <property type="entry name" value="aa-tRNA-synth_I_cd-bd"/>
</dbReference>
<dbReference type="InterPro" id="IPR020751">
    <property type="entry name" value="aa-tRNA-synth_I_codon-bd_sub2"/>
</dbReference>
<dbReference type="InterPro" id="IPR001412">
    <property type="entry name" value="aa-tRNA-synth_I_CS"/>
</dbReference>
<dbReference type="InterPro" id="IPR008925">
    <property type="entry name" value="aa_tRNA-synth_I_cd-bd_sf"/>
</dbReference>
<dbReference type="InterPro" id="IPR004527">
    <property type="entry name" value="Glu-tRNA-ligase_bac/mito"/>
</dbReference>
<dbReference type="InterPro" id="IPR000924">
    <property type="entry name" value="Glu/Gln-tRNA-synth"/>
</dbReference>
<dbReference type="InterPro" id="IPR020058">
    <property type="entry name" value="Glu/Gln-tRNA-synth_Ib_cat-dom"/>
</dbReference>
<dbReference type="InterPro" id="IPR049940">
    <property type="entry name" value="GluQ/Sye"/>
</dbReference>
<dbReference type="InterPro" id="IPR033910">
    <property type="entry name" value="GluRS_core"/>
</dbReference>
<dbReference type="InterPro" id="IPR014729">
    <property type="entry name" value="Rossmann-like_a/b/a_fold"/>
</dbReference>
<dbReference type="NCBIfam" id="TIGR00464">
    <property type="entry name" value="gltX_bact"/>
    <property type="match status" value="1"/>
</dbReference>
<dbReference type="PANTHER" id="PTHR43311">
    <property type="entry name" value="GLUTAMATE--TRNA LIGASE"/>
    <property type="match status" value="1"/>
</dbReference>
<dbReference type="PANTHER" id="PTHR43311:SF2">
    <property type="entry name" value="GLUTAMATE--TRNA LIGASE, MITOCHONDRIAL-RELATED"/>
    <property type="match status" value="1"/>
</dbReference>
<dbReference type="Pfam" id="PF19269">
    <property type="entry name" value="Anticodon_2"/>
    <property type="match status" value="1"/>
</dbReference>
<dbReference type="Pfam" id="PF00749">
    <property type="entry name" value="tRNA-synt_1c"/>
    <property type="match status" value="1"/>
</dbReference>
<dbReference type="PRINTS" id="PR00987">
    <property type="entry name" value="TRNASYNTHGLU"/>
</dbReference>
<dbReference type="SUPFAM" id="SSF48163">
    <property type="entry name" value="An anticodon-binding domain of class I aminoacyl-tRNA synthetases"/>
    <property type="match status" value="1"/>
</dbReference>
<dbReference type="SUPFAM" id="SSF52374">
    <property type="entry name" value="Nucleotidylyl transferase"/>
    <property type="match status" value="1"/>
</dbReference>
<dbReference type="PROSITE" id="PS00178">
    <property type="entry name" value="AA_TRNA_LIGASE_I"/>
    <property type="match status" value="1"/>
</dbReference>
<feature type="chain" id="PRO_0000237345" description="Glutamate--tRNA ligase 1">
    <location>
        <begin position="1"/>
        <end position="457"/>
    </location>
</feature>
<feature type="short sequence motif" description="'HIGH' region" evidence="1">
    <location>
        <begin position="9"/>
        <end position="19"/>
    </location>
</feature>
<feature type="short sequence motif" description="'KMSKS' region" evidence="1">
    <location>
        <begin position="250"/>
        <end position="254"/>
    </location>
</feature>
<feature type="binding site" evidence="1">
    <location>
        <position position="253"/>
    </location>
    <ligand>
        <name>ATP</name>
        <dbReference type="ChEBI" id="CHEBI:30616"/>
    </ligand>
</feature>
<evidence type="ECO:0000255" key="1">
    <source>
        <dbReference type="HAMAP-Rule" id="MF_00022"/>
    </source>
</evidence>
<organism>
    <name type="scientific">Brucella abortus (strain 2308)</name>
    <dbReference type="NCBI Taxonomy" id="359391"/>
    <lineage>
        <taxon>Bacteria</taxon>
        <taxon>Pseudomonadati</taxon>
        <taxon>Pseudomonadota</taxon>
        <taxon>Alphaproteobacteria</taxon>
        <taxon>Hyphomicrobiales</taxon>
        <taxon>Brucellaceae</taxon>
        <taxon>Brucella/Ochrobactrum group</taxon>
        <taxon>Brucella</taxon>
    </lineage>
</organism>
<keyword id="KW-0030">Aminoacyl-tRNA synthetase</keyword>
<keyword id="KW-0067">ATP-binding</keyword>
<keyword id="KW-0963">Cytoplasm</keyword>
<keyword id="KW-0436">Ligase</keyword>
<keyword id="KW-0547">Nucleotide-binding</keyword>
<keyword id="KW-0648">Protein biosynthesis</keyword>
<keyword id="KW-1185">Reference proteome</keyword>
<name>SYE1_BRUA2</name>